<reference key="1">
    <citation type="submission" date="2006-08" db="EMBL/GenBank/DDBJ databases">
        <title>Positive selection in transcription factor genes on the human lineage.</title>
        <authorList>
            <person name="Nickel G.C."/>
            <person name="Tefft D.L."/>
            <person name="Trevarthen K."/>
            <person name="Funt J."/>
            <person name="Adams M.D."/>
        </authorList>
    </citation>
    <scope>NUCLEOTIDE SEQUENCE [GENOMIC DNA]</scope>
</reference>
<name>ZKSC5_PANTR</name>
<feature type="chain" id="PRO_0000285464" description="Zinc finger protein with KRAB and SCAN domains 5">
    <location>
        <begin position="1"/>
        <end position="839"/>
    </location>
</feature>
<feature type="domain" description="SCAN box" evidence="4">
    <location>
        <begin position="51"/>
        <end position="132"/>
    </location>
</feature>
<feature type="domain" description="KRAB" evidence="3">
    <location>
        <begin position="218"/>
        <end position="291"/>
    </location>
</feature>
<feature type="zinc finger region" description="C2H2-type 1" evidence="2">
    <location>
        <begin position="346"/>
        <end position="368"/>
    </location>
</feature>
<feature type="zinc finger region" description="C2H2-type 2" evidence="2">
    <location>
        <begin position="374"/>
        <end position="396"/>
    </location>
</feature>
<feature type="zinc finger region" description="C2H2-type 3" evidence="2">
    <location>
        <begin position="402"/>
        <end position="424"/>
    </location>
</feature>
<feature type="zinc finger region" description="C2H2-type 4" evidence="2">
    <location>
        <begin position="430"/>
        <end position="452"/>
    </location>
</feature>
<feature type="zinc finger region" description="C2H2-type 5" evidence="2">
    <location>
        <begin position="549"/>
        <end position="571"/>
    </location>
</feature>
<feature type="zinc finger region" description="C2H2-type 6" evidence="2">
    <location>
        <begin position="577"/>
        <end position="599"/>
    </location>
</feature>
<feature type="zinc finger region" description="C2H2-type 7" evidence="2">
    <location>
        <begin position="605"/>
        <end position="627"/>
    </location>
</feature>
<feature type="zinc finger region" description="C2H2-type 8" evidence="2">
    <location>
        <begin position="633"/>
        <end position="655"/>
    </location>
</feature>
<feature type="zinc finger region" description="C2H2-type 9" evidence="2">
    <location>
        <begin position="661"/>
        <end position="683"/>
    </location>
</feature>
<feature type="zinc finger region" description="C2H2-type 10" evidence="2">
    <location>
        <begin position="717"/>
        <end position="739"/>
    </location>
</feature>
<feature type="zinc finger region" description="C2H2-type 11; atypical" evidence="2">
    <location>
        <begin position="745"/>
        <end position="763"/>
    </location>
</feature>
<feature type="zinc finger region" description="C2H2-type 12" evidence="2">
    <location>
        <begin position="773"/>
        <end position="795"/>
    </location>
</feature>
<feature type="zinc finger region" description="C2H2-type 13" evidence="2">
    <location>
        <begin position="801"/>
        <end position="823"/>
    </location>
</feature>
<feature type="region of interest" description="Disordered" evidence="5">
    <location>
        <begin position="151"/>
        <end position="175"/>
    </location>
</feature>
<feature type="compositionally biased region" description="Polar residues" evidence="5">
    <location>
        <begin position="158"/>
        <end position="173"/>
    </location>
</feature>
<feature type="modified residue" description="Phosphoserine" evidence="1">
    <location>
        <position position="335"/>
    </location>
</feature>
<feature type="cross-link" description="Glycyl lysine isopeptide (Lys-Gly) (interchain with G-Cter in SUMO2)" evidence="1">
    <location>
        <position position="216"/>
    </location>
</feature>
<feature type="cross-link" description="Glycyl lysine isopeptide (Lys-Gly) (interchain with G-Cter in SUMO2)" evidence="1">
    <location>
        <position position="248"/>
    </location>
</feature>
<feature type="cross-link" description="Glycyl lysine isopeptide (Lys-Gly) (interchain with G-Cter in SUMO2)" evidence="1">
    <location>
        <position position="270"/>
    </location>
</feature>
<feature type="cross-link" description="Glycyl lysine isopeptide (Lys-Gly) (interchain with G-Cter in SUMO2)" evidence="1">
    <location>
        <position position="303"/>
    </location>
</feature>
<feature type="cross-link" description="Glycyl lysine isopeptide (Lys-Gly) (interchain with G-Cter in SUMO2)" evidence="1">
    <location>
        <position position="317"/>
    </location>
</feature>
<feature type="cross-link" description="Glycyl lysine isopeptide (Lys-Gly) (interchain with G-Cter in SUMO2)" evidence="1">
    <location>
        <position position="509"/>
    </location>
</feature>
<feature type="cross-link" description="Glycyl lysine isopeptide (Lys-Gly) (interchain with G-Cter in SUMO2)" evidence="1">
    <location>
        <position position="513"/>
    </location>
</feature>
<feature type="cross-link" description="Glycyl lysine isopeptide (Lys-Gly) (interchain with G-Cter in SUMO2)" evidence="1">
    <location>
        <position position="709"/>
    </location>
</feature>
<feature type="cross-link" description="Glycyl lysine isopeptide (Lys-Gly) (interchain with G-Cter in SUMO2)" evidence="1">
    <location>
        <position position="785"/>
    </location>
</feature>
<gene>
    <name type="primary">ZKSCAN5</name>
    <name type="synonym">ZFP95</name>
</gene>
<dbReference type="EMBL" id="DQ977421">
    <property type="protein sequence ID" value="ABM92087.1"/>
    <property type="molecule type" value="Genomic_DNA"/>
</dbReference>
<dbReference type="RefSeq" id="NP_001138504.1">
    <property type="nucleotide sequence ID" value="NM_001145032.1"/>
</dbReference>
<dbReference type="RefSeq" id="XP_009451526.1">
    <property type="nucleotide sequence ID" value="XM_009453251.5"/>
</dbReference>
<dbReference type="RefSeq" id="XP_009451527.1">
    <property type="nucleotide sequence ID" value="XM_009453252.5"/>
</dbReference>
<dbReference type="RefSeq" id="XP_009451529.1">
    <property type="nucleotide sequence ID" value="XM_009453254.5"/>
</dbReference>
<dbReference type="RefSeq" id="XP_009451530.1">
    <property type="nucleotide sequence ID" value="XM_009453255.5"/>
</dbReference>
<dbReference type="SMR" id="A2T7D2"/>
<dbReference type="FunCoup" id="A2T7D2">
    <property type="interactions" value="1418"/>
</dbReference>
<dbReference type="STRING" id="9598.ENSPTRP00000033288"/>
<dbReference type="PaxDb" id="9598-ENSPTRP00000033288"/>
<dbReference type="Ensembl" id="ENSPTRT00000036012.4">
    <property type="protein sequence ID" value="ENSPTRP00000033288.3"/>
    <property type="gene ID" value="ENSPTRG00000019455.6"/>
</dbReference>
<dbReference type="GeneID" id="737683"/>
<dbReference type="KEGG" id="ptr:737683"/>
<dbReference type="CTD" id="23660"/>
<dbReference type="VGNC" id="VGNC:4571">
    <property type="gene designation" value="ZKSCAN5"/>
</dbReference>
<dbReference type="eggNOG" id="KOG1721">
    <property type="taxonomic scope" value="Eukaryota"/>
</dbReference>
<dbReference type="GeneTree" id="ENSGT00940000162299"/>
<dbReference type="HOGENOM" id="CLU_002678_23_3_1"/>
<dbReference type="InParanoid" id="A2T7D2"/>
<dbReference type="OMA" id="KSQRCND"/>
<dbReference type="OrthoDB" id="1025at9604"/>
<dbReference type="TreeFam" id="TF338146"/>
<dbReference type="Proteomes" id="UP000002277">
    <property type="component" value="Chromosome 7"/>
</dbReference>
<dbReference type="Bgee" id="ENSPTRG00000019455">
    <property type="expression patterns" value="Expressed in fibroblast and 21 other cell types or tissues"/>
</dbReference>
<dbReference type="GO" id="GO:0005634">
    <property type="term" value="C:nucleus"/>
    <property type="evidence" value="ECO:0000318"/>
    <property type="project" value="GO_Central"/>
</dbReference>
<dbReference type="GO" id="GO:0000981">
    <property type="term" value="F:DNA-binding transcription factor activity, RNA polymerase II-specific"/>
    <property type="evidence" value="ECO:0000318"/>
    <property type="project" value="GO_Central"/>
</dbReference>
<dbReference type="GO" id="GO:0000978">
    <property type="term" value="F:RNA polymerase II cis-regulatory region sequence-specific DNA binding"/>
    <property type="evidence" value="ECO:0000318"/>
    <property type="project" value="GO_Central"/>
</dbReference>
<dbReference type="GO" id="GO:0008270">
    <property type="term" value="F:zinc ion binding"/>
    <property type="evidence" value="ECO:0007669"/>
    <property type="project" value="UniProtKB-KW"/>
</dbReference>
<dbReference type="GO" id="GO:0006357">
    <property type="term" value="P:regulation of transcription by RNA polymerase II"/>
    <property type="evidence" value="ECO:0000318"/>
    <property type="project" value="GO_Central"/>
</dbReference>
<dbReference type="CDD" id="cd07765">
    <property type="entry name" value="KRAB_A-box"/>
    <property type="match status" value="1"/>
</dbReference>
<dbReference type="CDD" id="cd07936">
    <property type="entry name" value="SCAN"/>
    <property type="match status" value="1"/>
</dbReference>
<dbReference type="FunFam" id="3.30.160.60:FF:000295">
    <property type="entry name" value="zinc finger protein 19"/>
    <property type="match status" value="1"/>
</dbReference>
<dbReference type="FunFam" id="1.10.4020.10:FF:000001">
    <property type="entry name" value="zinc finger protein 263 isoform X1"/>
    <property type="match status" value="1"/>
</dbReference>
<dbReference type="FunFam" id="3.30.160.60:FF:001248">
    <property type="entry name" value="zinc finger protein 333 isoform X2"/>
    <property type="match status" value="1"/>
</dbReference>
<dbReference type="FunFam" id="3.30.160.60:FF:000690">
    <property type="entry name" value="Zinc finger protein 354C"/>
    <property type="match status" value="1"/>
</dbReference>
<dbReference type="FunFam" id="3.30.160.60:FF:000016">
    <property type="entry name" value="zinc finger protein 37 homolog"/>
    <property type="match status" value="2"/>
</dbReference>
<dbReference type="FunFam" id="3.30.160.60:FF:001898">
    <property type="entry name" value="Zinc finger protein with KRAB and SCAN domains 5"/>
    <property type="match status" value="1"/>
</dbReference>
<dbReference type="FunFam" id="3.30.160.60:FF:000509">
    <property type="entry name" value="zinc finger protein with KRAB and SCAN domains 5"/>
    <property type="match status" value="2"/>
</dbReference>
<dbReference type="FunFam" id="3.30.160.60:FF:000642">
    <property type="entry name" value="Zinc finger with KRAB and SCAN domains 2"/>
    <property type="match status" value="2"/>
</dbReference>
<dbReference type="FunFam" id="3.30.160.60:FF:001643">
    <property type="entry name" value="Zinc finger with KRAB and SCAN domains 5"/>
    <property type="match status" value="1"/>
</dbReference>
<dbReference type="Gene3D" id="6.10.140.140">
    <property type="match status" value="1"/>
</dbReference>
<dbReference type="Gene3D" id="3.30.160.60">
    <property type="entry name" value="Classic Zinc Finger"/>
    <property type="match status" value="13"/>
</dbReference>
<dbReference type="Gene3D" id="1.10.4020.10">
    <property type="entry name" value="DNA breaking-rejoining enzymes"/>
    <property type="match status" value="1"/>
</dbReference>
<dbReference type="InterPro" id="IPR001909">
    <property type="entry name" value="KRAB"/>
</dbReference>
<dbReference type="InterPro" id="IPR036051">
    <property type="entry name" value="KRAB_dom_sf"/>
</dbReference>
<dbReference type="InterPro" id="IPR003309">
    <property type="entry name" value="SCAN_dom"/>
</dbReference>
<dbReference type="InterPro" id="IPR038269">
    <property type="entry name" value="SCAN_sf"/>
</dbReference>
<dbReference type="InterPro" id="IPR036236">
    <property type="entry name" value="Znf_C2H2_sf"/>
</dbReference>
<dbReference type="InterPro" id="IPR013087">
    <property type="entry name" value="Znf_C2H2_type"/>
</dbReference>
<dbReference type="PANTHER" id="PTHR24393:SF15">
    <property type="entry name" value="IP01243P-RELATED"/>
    <property type="match status" value="1"/>
</dbReference>
<dbReference type="PANTHER" id="PTHR24393">
    <property type="entry name" value="ZINC FINGER PROTEIN"/>
    <property type="match status" value="1"/>
</dbReference>
<dbReference type="Pfam" id="PF01352">
    <property type="entry name" value="KRAB"/>
    <property type="match status" value="1"/>
</dbReference>
<dbReference type="Pfam" id="PF02023">
    <property type="entry name" value="SCAN"/>
    <property type="match status" value="1"/>
</dbReference>
<dbReference type="Pfam" id="PF00096">
    <property type="entry name" value="zf-C2H2"/>
    <property type="match status" value="10"/>
</dbReference>
<dbReference type="SMART" id="SM00349">
    <property type="entry name" value="KRAB"/>
    <property type="match status" value="1"/>
</dbReference>
<dbReference type="SMART" id="SM00431">
    <property type="entry name" value="SCAN"/>
    <property type="match status" value="1"/>
</dbReference>
<dbReference type="SMART" id="SM00355">
    <property type="entry name" value="ZnF_C2H2"/>
    <property type="match status" value="12"/>
</dbReference>
<dbReference type="SUPFAM" id="SSF57667">
    <property type="entry name" value="beta-beta-alpha zinc fingers"/>
    <property type="match status" value="7"/>
</dbReference>
<dbReference type="SUPFAM" id="SSF109640">
    <property type="entry name" value="KRAB domain (Kruppel-associated box)"/>
    <property type="match status" value="1"/>
</dbReference>
<dbReference type="SUPFAM" id="SSF47353">
    <property type="entry name" value="Retrovirus capsid dimerization domain-like"/>
    <property type="match status" value="1"/>
</dbReference>
<dbReference type="PROSITE" id="PS50805">
    <property type="entry name" value="KRAB"/>
    <property type="match status" value="1"/>
</dbReference>
<dbReference type="PROSITE" id="PS50804">
    <property type="entry name" value="SCAN_BOX"/>
    <property type="match status" value="1"/>
</dbReference>
<dbReference type="PROSITE" id="PS00028">
    <property type="entry name" value="ZINC_FINGER_C2H2_1"/>
    <property type="match status" value="12"/>
</dbReference>
<dbReference type="PROSITE" id="PS50157">
    <property type="entry name" value="ZINC_FINGER_C2H2_2"/>
    <property type="match status" value="13"/>
</dbReference>
<protein>
    <recommendedName>
        <fullName>Zinc finger protein with KRAB and SCAN domains 5</fullName>
    </recommendedName>
    <alternativeName>
        <fullName>Zinc finger protein 95 homolog</fullName>
        <shortName>Zfp-95</shortName>
    </alternativeName>
</protein>
<comment type="function">
    <text>May be involved in transcriptional regulation.</text>
</comment>
<comment type="subcellular location">
    <subcellularLocation>
        <location evidence="4">Nucleus</location>
    </subcellularLocation>
</comment>
<comment type="similarity">
    <text evidence="6">Belongs to the krueppel C2H2-type zinc-finger protein family.</text>
</comment>
<organism>
    <name type="scientific">Pan troglodytes</name>
    <name type="common">Chimpanzee</name>
    <dbReference type="NCBI Taxonomy" id="9598"/>
    <lineage>
        <taxon>Eukaryota</taxon>
        <taxon>Metazoa</taxon>
        <taxon>Chordata</taxon>
        <taxon>Craniata</taxon>
        <taxon>Vertebrata</taxon>
        <taxon>Euteleostomi</taxon>
        <taxon>Mammalia</taxon>
        <taxon>Eutheria</taxon>
        <taxon>Euarchontoglires</taxon>
        <taxon>Primates</taxon>
        <taxon>Haplorrhini</taxon>
        <taxon>Catarrhini</taxon>
        <taxon>Hominidae</taxon>
        <taxon>Pan</taxon>
    </lineage>
</organism>
<accession>A2T7D2</accession>
<sequence length="839" mass="96909">MIMTESREVIDLDPPAETSQEQEDLFIVKVEEEDCTWMQEYNPPTFETFYQRFRHFQYHEASGPREALSQLRVLCCEWLRPELHTKEQILELLVLEQFLTILPEEFQPWVREHHPESGEEAVAVIENIQRELEERRQQIVACPDVLPRKMAPPGAVQESCSPQPLTVDTQPEQAPQKPRLLEENALPVLQVPSLPLKDSQELTASLLSTGSQKLVKIEEVADVAVSFILEEWGHLDQSQKSLYRDDRKENYGSITSMGYESRDNMELIVKQISDDSESRWVAPEHTERSVPQDPDFAEVSDLKGMVQRWQVNPTVGKSRQNPSQKRDLDAITDISPKQSTHGERGHRCSDCGKFFLQASNFIQHRRIHTGEKPFKCGECGKSYNQRVHLTQHQRVHTGEKPYKCQVCGKAFRVSSHLVQHHSVHSGERPYGCNECGKNFGRHSHLIEHLKRHFREKSQRCSDKRSKNTKLSVKKKISEYSEADMELSGKTQRNVSQVQDFGEGCEFQGKLDRKQGIPMKEILGQPSSKRMNYSEVPYVHKKSSTGERPHKCNECGKSFIQSAHLIQHQRIHTGEKPFRCEECGKSYNQRVHLTQHQRVHTGEKPYTCPLCGKAFRVRSHLVQHQSVHSGERPFKCNECGKGFGRRSHLAGHLRLHSREKSHQCRECGEIFFQYVSLIEHQVLHMGQKNEKNGICEEAYSWNLTVIEDKKIELQEQPYQCDICGKAFGYSSDLIQHYRTHTAEKPYQCDICRENVGQCSHTKQHQKIYSSTKSHQCHECGRGFTLKSHLNQHQRIHTGEKPFQCKECGMNFSWSCSLFKHLRSHERTDPINTLSVEGSLL</sequence>
<proteinExistence type="inferred from homology"/>
<keyword id="KW-0238">DNA-binding</keyword>
<keyword id="KW-1017">Isopeptide bond</keyword>
<keyword id="KW-0479">Metal-binding</keyword>
<keyword id="KW-0539">Nucleus</keyword>
<keyword id="KW-0597">Phosphoprotein</keyword>
<keyword id="KW-1185">Reference proteome</keyword>
<keyword id="KW-0677">Repeat</keyword>
<keyword id="KW-0804">Transcription</keyword>
<keyword id="KW-0805">Transcription regulation</keyword>
<keyword id="KW-0832">Ubl conjugation</keyword>
<keyword id="KW-0862">Zinc</keyword>
<keyword id="KW-0863">Zinc-finger</keyword>
<evidence type="ECO:0000250" key="1">
    <source>
        <dbReference type="UniProtKB" id="Q9Y2L8"/>
    </source>
</evidence>
<evidence type="ECO:0000255" key="2">
    <source>
        <dbReference type="PROSITE-ProRule" id="PRU00042"/>
    </source>
</evidence>
<evidence type="ECO:0000255" key="3">
    <source>
        <dbReference type="PROSITE-ProRule" id="PRU00119"/>
    </source>
</evidence>
<evidence type="ECO:0000255" key="4">
    <source>
        <dbReference type="PROSITE-ProRule" id="PRU00187"/>
    </source>
</evidence>
<evidence type="ECO:0000256" key="5">
    <source>
        <dbReference type="SAM" id="MobiDB-lite"/>
    </source>
</evidence>
<evidence type="ECO:0000305" key="6"/>